<keyword id="KW-0687">Ribonucleoprotein</keyword>
<keyword id="KW-0689">Ribosomal protein</keyword>
<feature type="chain" id="PRO_1000126804" description="Large ribosomal subunit protein bL31B">
    <location>
        <begin position="1"/>
        <end position="87"/>
    </location>
</feature>
<accession>B7M2U3</accession>
<organism>
    <name type="scientific">Escherichia coli O8 (strain IAI1)</name>
    <dbReference type="NCBI Taxonomy" id="585034"/>
    <lineage>
        <taxon>Bacteria</taxon>
        <taxon>Pseudomonadati</taxon>
        <taxon>Pseudomonadota</taxon>
        <taxon>Gammaproteobacteria</taxon>
        <taxon>Enterobacterales</taxon>
        <taxon>Enterobacteriaceae</taxon>
        <taxon>Escherichia</taxon>
    </lineage>
</organism>
<gene>
    <name evidence="1" type="primary">rpmE2</name>
    <name type="ordered locus">ECIAI1_0296</name>
</gene>
<protein>
    <recommendedName>
        <fullName evidence="1">Large ribosomal subunit protein bL31B</fullName>
    </recommendedName>
    <alternativeName>
        <fullName evidence="2">50S ribosomal protein L31 type B</fullName>
    </alternativeName>
</protein>
<proteinExistence type="inferred from homology"/>
<comment type="subunit">
    <text evidence="1">Part of the 50S ribosomal subunit.</text>
</comment>
<comment type="similarity">
    <text evidence="1">Belongs to the bacterial ribosomal protein bL31 family. Type B subfamily.</text>
</comment>
<sequence length="87" mass="9936">MKPNIHPEYRTVVFHDTSVDEYFKIGSTIKTDREIELDGVTYPYVTIDVSSKSHPFYTGKLRTVASEGNVARFTQRFGRFVSTKKGS</sequence>
<name>RL31B_ECO8A</name>
<reference key="1">
    <citation type="journal article" date="2009" name="PLoS Genet.">
        <title>Organised genome dynamics in the Escherichia coli species results in highly diverse adaptive paths.</title>
        <authorList>
            <person name="Touchon M."/>
            <person name="Hoede C."/>
            <person name="Tenaillon O."/>
            <person name="Barbe V."/>
            <person name="Baeriswyl S."/>
            <person name="Bidet P."/>
            <person name="Bingen E."/>
            <person name="Bonacorsi S."/>
            <person name="Bouchier C."/>
            <person name="Bouvet O."/>
            <person name="Calteau A."/>
            <person name="Chiapello H."/>
            <person name="Clermont O."/>
            <person name="Cruveiller S."/>
            <person name="Danchin A."/>
            <person name="Diard M."/>
            <person name="Dossat C."/>
            <person name="Karoui M.E."/>
            <person name="Frapy E."/>
            <person name="Garry L."/>
            <person name="Ghigo J.M."/>
            <person name="Gilles A.M."/>
            <person name="Johnson J."/>
            <person name="Le Bouguenec C."/>
            <person name="Lescat M."/>
            <person name="Mangenot S."/>
            <person name="Martinez-Jehanne V."/>
            <person name="Matic I."/>
            <person name="Nassif X."/>
            <person name="Oztas S."/>
            <person name="Petit M.A."/>
            <person name="Pichon C."/>
            <person name="Rouy Z."/>
            <person name="Ruf C.S."/>
            <person name="Schneider D."/>
            <person name="Tourret J."/>
            <person name="Vacherie B."/>
            <person name="Vallenet D."/>
            <person name="Medigue C."/>
            <person name="Rocha E.P.C."/>
            <person name="Denamur E."/>
        </authorList>
    </citation>
    <scope>NUCLEOTIDE SEQUENCE [LARGE SCALE GENOMIC DNA]</scope>
    <source>
        <strain>IAI1</strain>
    </source>
</reference>
<dbReference type="EMBL" id="CU928160">
    <property type="protein sequence ID" value="CAQ97170.1"/>
    <property type="molecule type" value="Genomic_DNA"/>
</dbReference>
<dbReference type="RefSeq" id="WP_000803999.1">
    <property type="nucleotide sequence ID" value="NC_011741.1"/>
</dbReference>
<dbReference type="SMR" id="B7M2U3"/>
<dbReference type="KEGG" id="ecr:ECIAI1_0296"/>
<dbReference type="HOGENOM" id="CLU_114306_2_1_6"/>
<dbReference type="GO" id="GO:1990904">
    <property type="term" value="C:ribonucleoprotein complex"/>
    <property type="evidence" value="ECO:0007669"/>
    <property type="project" value="UniProtKB-KW"/>
</dbReference>
<dbReference type="GO" id="GO:0005840">
    <property type="term" value="C:ribosome"/>
    <property type="evidence" value="ECO:0007669"/>
    <property type="project" value="UniProtKB-KW"/>
</dbReference>
<dbReference type="GO" id="GO:0003735">
    <property type="term" value="F:structural constituent of ribosome"/>
    <property type="evidence" value="ECO:0007669"/>
    <property type="project" value="InterPro"/>
</dbReference>
<dbReference type="GO" id="GO:0006412">
    <property type="term" value="P:translation"/>
    <property type="evidence" value="ECO:0007669"/>
    <property type="project" value="UniProtKB-UniRule"/>
</dbReference>
<dbReference type="FunFam" id="4.10.830.30:FF:000002">
    <property type="entry name" value="50S ribosomal protein L31 type B"/>
    <property type="match status" value="1"/>
</dbReference>
<dbReference type="Gene3D" id="4.10.830.30">
    <property type="entry name" value="Ribosomal protein L31"/>
    <property type="match status" value="1"/>
</dbReference>
<dbReference type="HAMAP" id="MF_00502">
    <property type="entry name" value="Ribosomal_bL31_2"/>
    <property type="match status" value="1"/>
</dbReference>
<dbReference type="InterPro" id="IPR034704">
    <property type="entry name" value="Ribosomal_bL28/bL31-like_sf"/>
</dbReference>
<dbReference type="InterPro" id="IPR002150">
    <property type="entry name" value="Ribosomal_bL31"/>
</dbReference>
<dbReference type="InterPro" id="IPR027493">
    <property type="entry name" value="Ribosomal_bL31_B"/>
</dbReference>
<dbReference type="InterPro" id="IPR042105">
    <property type="entry name" value="Ribosomal_bL31_sf"/>
</dbReference>
<dbReference type="NCBIfam" id="TIGR00105">
    <property type="entry name" value="L31"/>
    <property type="match status" value="1"/>
</dbReference>
<dbReference type="NCBIfam" id="NF002462">
    <property type="entry name" value="PRK01678.1"/>
    <property type="match status" value="1"/>
</dbReference>
<dbReference type="PANTHER" id="PTHR33280">
    <property type="entry name" value="50S RIBOSOMAL PROTEIN L31, CHLOROPLASTIC"/>
    <property type="match status" value="1"/>
</dbReference>
<dbReference type="PANTHER" id="PTHR33280:SF1">
    <property type="entry name" value="LARGE RIBOSOMAL SUBUNIT PROTEIN BL31C"/>
    <property type="match status" value="1"/>
</dbReference>
<dbReference type="Pfam" id="PF01197">
    <property type="entry name" value="Ribosomal_L31"/>
    <property type="match status" value="1"/>
</dbReference>
<dbReference type="PRINTS" id="PR01249">
    <property type="entry name" value="RIBOSOMALL31"/>
</dbReference>
<dbReference type="SUPFAM" id="SSF143800">
    <property type="entry name" value="L28p-like"/>
    <property type="match status" value="1"/>
</dbReference>
<dbReference type="PROSITE" id="PS01143">
    <property type="entry name" value="RIBOSOMAL_L31"/>
    <property type="match status" value="1"/>
</dbReference>
<evidence type="ECO:0000255" key="1">
    <source>
        <dbReference type="HAMAP-Rule" id="MF_00502"/>
    </source>
</evidence>
<evidence type="ECO:0000305" key="2"/>